<reference key="1">
    <citation type="journal article" date="1999" name="Nature">
        <title>Sequence and analysis of chromosome 2 of the plant Arabidopsis thaliana.</title>
        <authorList>
            <person name="Lin X."/>
            <person name="Kaul S."/>
            <person name="Rounsley S.D."/>
            <person name="Shea T.P."/>
            <person name="Benito M.-I."/>
            <person name="Town C.D."/>
            <person name="Fujii C.Y."/>
            <person name="Mason T.M."/>
            <person name="Bowman C.L."/>
            <person name="Barnstead M.E."/>
            <person name="Feldblyum T.V."/>
            <person name="Buell C.R."/>
            <person name="Ketchum K.A."/>
            <person name="Lee J.J."/>
            <person name="Ronning C.M."/>
            <person name="Koo H.L."/>
            <person name="Moffat K.S."/>
            <person name="Cronin L.A."/>
            <person name="Shen M."/>
            <person name="Pai G."/>
            <person name="Van Aken S."/>
            <person name="Umayam L."/>
            <person name="Tallon L.J."/>
            <person name="Gill J.E."/>
            <person name="Adams M.D."/>
            <person name="Carrera A.J."/>
            <person name="Creasy T.H."/>
            <person name="Goodman H.M."/>
            <person name="Somerville C.R."/>
            <person name="Copenhaver G.P."/>
            <person name="Preuss D."/>
            <person name="Nierman W.C."/>
            <person name="White O."/>
            <person name="Eisen J.A."/>
            <person name="Salzberg S.L."/>
            <person name="Fraser C.M."/>
            <person name="Venter J.C."/>
        </authorList>
    </citation>
    <scope>NUCLEOTIDE SEQUENCE [LARGE SCALE GENOMIC DNA]</scope>
    <source>
        <strain>cv. Columbia</strain>
    </source>
</reference>
<reference key="2">
    <citation type="journal article" date="2017" name="Plant J.">
        <title>Araport11: a complete reannotation of the Arabidopsis thaliana reference genome.</title>
        <authorList>
            <person name="Cheng C.Y."/>
            <person name="Krishnakumar V."/>
            <person name="Chan A.P."/>
            <person name="Thibaud-Nissen F."/>
            <person name="Schobel S."/>
            <person name="Town C.D."/>
        </authorList>
    </citation>
    <scope>GENOME REANNOTATION</scope>
    <source>
        <strain>cv. Columbia</strain>
    </source>
</reference>
<reference key="3">
    <citation type="submission" date="2006-07" db="EMBL/GenBank/DDBJ databases">
        <title>Large-scale analysis of RIKEN Arabidopsis full-length (RAFL) cDNAs.</title>
        <authorList>
            <person name="Totoki Y."/>
            <person name="Seki M."/>
            <person name="Ishida J."/>
            <person name="Nakajima M."/>
            <person name="Enju A."/>
            <person name="Kamiya A."/>
            <person name="Narusaka M."/>
            <person name="Shin-i T."/>
            <person name="Nakagawa M."/>
            <person name="Sakamoto N."/>
            <person name="Oishi K."/>
            <person name="Kohara Y."/>
            <person name="Kobayashi M."/>
            <person name="Toyoda A."/>
            <person name="Sakaki Y."/>
            <person name="Sakurai T."/>
            <person name="Iida K."/>
            <person name="Akiyama K."/>
            <person name="Satou M."/>
            <person name="Toyoda T."/>
            <person name="Konagaya A."/>
            <person name="Carninci P."/>
            <person name="Kawai J."/>
            <person name="Hayashizaki Y."/>
            <person name="Shinozaki K."/>
        </authorList>
    </citation>
    <scope>NUCLEOTIDE SEQUENCE [LARGE SCALE MRNA] OF 234-407</scope>
    <source>
        <strain>cv. Columbia</strain>
    </source>
</reference>
<reference key="4">
    <citation type="submission" date="2006-12" db="EMBL/GenBank/DDBJ databases">
        <title>Arabidopsis ORF clones.</title>
        <authorList>
            <person name="Bautista V.R."/>
            <person name="Kim C.J."/>
            <person name="Chen H."/>
            <person name="Wu S.Y."/>
            <person name="De Los Reyes C."/>
            <person name="Ecker J.R."/>
        </authorList>
    </citation>
    <scope>NUCLEOTIDE SEQUENCE [LARGE SCALE MRNA]</scope>
    <source>
        <strain>cv. Columbia</strain>
    </source>
</reference>
<reference key="5">
    <citation type="journal article" date="2003" name="Plant J.">
        <title>Protein interaction analysis of SCF ubiquitin E3 ligase subunits from Arabidopsis.</title>
        <authorList>
            <person name="Risseeuw E.P."/>
            <person name="Daskalchuk T.E."/>
            <person name="Banks T.W."/>
            <person name="Liu E."/>
            <person name="Cotelesage J."/>
            <person name="Hellmann H."/>
            <person name="Estelle M."/>
            <person name="Somers D.E."/>
            <person name="Crosby W.L."/>
        </authorList>
    </citation>
    <scope>INTERACTION WITH SKP1A/ASK1</scope>
</reference>
<gene>
    <name type="primary">SKIP23</name>
    <name type="ordered locus">At2g17030</name>
    <name type="ORF">F6P23.19</name>
</gene>
<keyword id="KW-0539">Nucleus</keyword>
<keyword id="KW-1185">Reference proteome</keyword>
<keyword id="KW-0833">Ubl conjugation pathway</keyword>
<organism>
    <name type="scientific">Arabidopsis thaliana</name>
    <name type="common">Mouse-ear cress</name>
    <dbReference type="NCBI Taxonomy" id="3702"/>
    <lineage>
        <taxon>Eukaryota</taxon>
        <taxon>Viridiplantae</taxon>
        <taxon>Streptophyta</taxon>
        <taxon>Embryophyta</taxon>
        <taxon>Tracheophyta</taxon>
        <taxon>Spermatophyta</taxon>
        <taxon>Magnoliopsida</taxon>
        <taxon>eudicotyledons</taxon>
        <taxon>Gunneridae</taxon>
        <taxon>Pentapetalae</taxon>
        <taxon>rosids</taxon>
        <taxon>malvids</taxon>
        <taxon>Brassicales</taxon>
        <taxon>Brassicaceae</taxon>
        <taxon>Camelineae</taxon>
        <taxon>Arabidopsis</taxon>
    </lineage>
</organism>
<feature type="chain" id="PRO_0000274949" description="F-box protein SKIP23">
    <location>
        <begin position="1"/>
        <end position="407"/>
    </location>
</feature>
<feature type="domain" description="F-box">
    <location>
        <begin position="2"/>
        <end position="50"/>
    </location>
</feature>
<accession>Q3EBZ2</accession>
<accession>Q0WRT1</accession>
<accession>Q7XJL8</accession>
<sequence>MVDWSTLPKDLLDLISKSLESSFDLIQFRSVCSSWRSAAEPKSPLPTHHLPILPDNGGSLFPDSAVGFRLSQRSILLIKPHEPCIESDSFGWLIKVEEDLNVPRKVTLLDPLCDTRNSIPENFPRVLDMSKFKVRELGREFKLHYFNTVGDIVESLYLEKAVVKYLDCDGDYKFVLLTIHVSGKLAVFRSWDRAWTVINDMPSPYDDVMLFDGRFFAVDNNGRTVVVDYSSLKLTLVASPVFGGDKKFLIESCGEMLLVDMYLSLEAVEGDPGFVEEIFEHPAFYMNERTVKFKVYRFVEREESWVDVYDLEDKMLFLGDDSTFSASASDILPLCDGSSVFFNGNVFNGEDLGAMQDRDLGVFDFRSGKIELVQKLPEYAKLFWPPPPWITSHARAEDHIGETSSQS</sequence>
<evidence type="ECO:0000250" key="1"/>
<evidence type="ECO:0000269" key="2">
    <source>
    </source>
</evidence>
<proteinExistence type="evidence at protein level"/>
<comment type="function">
    <text evidence="1">Component of SCF(ASK-cullin-F-box) E3 ubiquitin ligase complexes, which may mediate the ubiquitination and subsequent proteasomal degradation of target proteins.</text>
</comment>
<comment type="pathway">
    <text>Protein modification; protein ubiquitination.</text>
</comment>
<comment type="subunit">
    <text evidence="1 2">Part of a SCF (ASK-cullin-F-box) protein ligase complex (By similarity). Interacts with SKP1A/ASK1.</text>
</comment>
<comment type="subcellular location">
    <subcellularLocation>
        <location evidence="1">Nucleus</location>
    </subcellularLocation>
</comment>
<comment type="domain">
    <text evidence="1">The F-box is necessary for the interaction with ASK proteins.</text>
</comment>
<name>SKI23_ARATH</name>
<protein>
    <recommendedName>
        <fullName>F-box protein SKIP23</fullName>
    </recommendedName>
    <alternativeName>
        <fullName>SKP1-interacting partner 23</fullName>
    </alternativeName>
</protein>
<dbReference type="EMBL" id="CP002685">
    <property type="protein sequence ID" value="AEC06574.1"/>
    <property type="molecule type" value="Genomic_DNA"/>
</dbReference>
<dbReference type="EMBL" id="AK228215">
    <property type="protein sequence ID" value="BAF00168.1"/>
    <property type="molecule type" value="mRNA"/>
</dbReference>
<dbReference type="EMBL" id="BT029773">
    <property type="protein sequence ID" value="ABM06043.1"/>
    <property type="molecule type" value="mRNA"/>
</dbReference>
<dbReference type="PIR" id="C84547">
    <property type="entry name" value="C84547"/>
</dbReference>
<dbReference type="RefSeq" id="NP_565401.1">
    <property type="nucleotide sequence ID" value="NM_127256.5"/>
</dbReference>
<dbReference type="BioGRID" id="1563">
    <property type="interactions" value="15"/>
</dbReference>
<dbReference type="FunCoup" id="Q3EBZ2">
    <property type="interactions" value="1619"/>
</dbReference>
<dbReference type="STRING" id="3702.Q3EBZ2"/>
<dbReference type="PaxDb" id="3702-AT2G17030.1"/>
<dbReference type="ProteomicsDB" id="234583"/>
<dbReference type="EnsemblPlants" id="AT2G17030.1">
    <property type="protein sequence ID" value="AT2G17030.1"/>
    <property type="gene ID" value="AT2G17030"/>
</dbReference>
<dbReference type="GeneID" id="816206"/>
<dbReference type="Gramene" id="AT2G17030.1">
    <property type="protein sequence ID" value="AT2G17030.1"/>
    <property type="gene ID" value="AT2G17030"/>
</dbReference>
<dbReference type="KEGG" id="ath:AT2G17030"/>
<dbReference type="Araport" id="AT2G17030"/>
<dbReference type="TAIR" id="AT2G17030">
    <property type="gene designation" value="SKIP23"/>
</dbReference>
<dbReference type="eggNOG" id="ENOG502QW71">
    <property type="taxonomic scope" value="Eukaryota"/>
</dbReference>
<dbReference type="HOGENOM" id="CLU_019286_1_0_1"/>
<dbReference type="InParanoid" id="Q3EBZ2"/>
<dbReference type="OMA" id="WGFYLSK"/>
<dbReference type="OrthoDB" id="599103at2759"/>
<dbReference type="PhylomeDB" id="Q3EBZ2"/>
<dbReference type="UniPathway" id="UPA00143"/>
<dbReference type="PRO" id="PR:Q3EBZ2"/>
<dbReference type="Proteomes" id="UP000006548">
    <property type="component" value="Chromosome 2"/>
</dbReference>
<dbReference type="ExpressionAtlas" id="Q3EBZ2">
    <property type="expression patterns" value="baseline and differential"/>
</dbReference>
<dbReference type="GO" id="GO:0005634">
    <property type="term" value="C:nucleus"/>
    <property type="evidence" value="ECO:0007669"/>
    <property type="project" value="UniProtKB-SubCell"/>
</dbReference>
<dbReference type="GO" id="GO:0016567">
    <property type="term" value="P:protein ubiquitination"/>
    <property type="evidence" value="ECO:0000314"/>
    <property type="project" value="TAIR"/>
</dbReference>
<dbReference type="FunFam" id="1.20.1280.50:FF:000065">
    <property type="entry name" value="F-box protein SKIP23"/>
    <property type="match status" value="1"/>
</dbReference>
<dbReference type="Gene3D" id="1.20.1280.50">
    <property type="match status" value="1"/>
</dbReference>
<dbReference type="InterPro" id="IPR036047">
    <property type="entry name" value="F-box-like_dom_sf"/>
</dbReference>
<dbReference type="InterPro" id="IPR001810">
    <property type="entry name" value="F-box_dom"/>
</dbReference>
<dbReference type="InterPro" id="IPR005174">
    <property type="entry name" value="KIB1-4_b-propeller"/>
</dbReference>
<dbReference type="InterPro" id="IPR051304">
    <property type="entry name" value="SCF_F-box_domain"/>
</dbReference>
<dbReference type="PANTHER" id="PTHR47123">
    <property type="entry name" value="F-BOX PROTEIN SKIP23"/>
    <property type="match status" value="1"/>
</dbReference>
<dbReference type="PANTHER" id="PTHR47123:SF15">
    <property type="entry name" value="F-BOX PROTEIN SKIP23"/>
    <property type="match status" value="1"/>
</dbReference>
<dbReference type="Pfam" id="PF03478">
    <property type="entry name" value="Beta-prop_KIB1-4"/>
    <property type="match status" value="1"/>
</dbReference>
<dbReference type="SMART" id="SM00256">
    <property type="entry name" value="FBOX"/>
    <property type="match status" value="1"/>
</dbReference>
<dbReference type="SUPFAM" id="SSF81383">
    <property type="entry name" value="F-box domain"/>
    <property type="match status" value="1"/>
</dbReference>